<comment type="function">
    <text evidence="1">One of the primary rRNA binding proteins, it binds directly to 16S rRNA where it nucleates assembly of the head domain of the 30S subunit.</text>
</comment>
<comment type="subunit">
    <text>Part of the 30S ribosomal subunit.</text>
</comment>
<comment type="subcellular location">
    <subcellularLocation>
        <location>Plastid</location>
        <location>Chloroplast</location>
    </subcellularLocation>
</comment>
<comment type="similarity">
    <text evidence="3">Belongs to the universal ribosomal protein uS7 family.</text>
</comment>
<name>RR7_PSINU</name>
<organism>
    <name type="scientific">Psilotum nudum</name>
    <name type="common">Whisk fern</name>
    <name type="synonym">Lycopodium nudum</name>
    <dbReference type="NCBI Taxonomy" id="3240"/>
    <lineage>
        <taxon>Eukaryota</taxon>
        <taxon>Viridiplantae</taxon>
        <taxon>Streptophyta</taxon>
        <taxon>Embryophyta</taxon>
        <taxon>Tracheophyta</taxon>
        <taxon>Polypodiopsida</taxon>
        <taxon>Ophioglossidae</taxon>
        <taxon>Psilotales</taxon>
        <taxon>Psilotaceae</taxon>
        <taxon>Psilotum</taxon>
    </lineage>
</organism>
<geneLocation type="chloroplast"/>
<dbReference type="EMBL" id="AP004638">
    <property type="protein sequence ID" value="BAB84263.1"/>
    <property type="molecule type" value="Genomic_DNA"/>
</dbReference>
<dbReference type="EMBL" id="AP004638">
    <property type="protein sequence ID" value="BAB84292.1"/>
    <property type="molecule type" value="Genomic_DNA"/>
</dbReference>
<dbReference type="SMR" id="Q8W8V0"/>
<dbReference type="GO" id="GO:0009507">
    <property type="term" value="C:chloroplast"/>
    <property type="evidence" value="ECO:0007669"/>
    <property type="project" value="UniProtKB-SubCell"/>
</dbReference>
<dbReference type="GO" id="GO:0015935">
    <property type="term" value="C:small ribosomal subunit"/>
    <property type="evidence" value="ECO:0007669"/>
    <property type="project" value="InterPro"/>
</dbReference>
<dbReference type="GO" id="GO:0019843">
    <property type="term" value="F:rRNA binding"/>
    <property type="evidence" value="ECO:0007669"/>
    <property type="project" value="UniProtKB-UniRule"/>
</dbReference>
<dbReference type="GO" id="GO:0003735">
    <property type="term" value="F:structural constituent of ribosome"/>
    <property type="evidence" value="ECO:0007669"/>
    <property type="project" value="InterPro"/>
</dbReference>
<dbReference type="GO" id="GO:0006412">
    <property type="term" value="P:translation"/>
    <property type="evidence" value="ECO:0007669"/>
    <property type="project" value="UniProtKB-UniRule"/>
</dbReference>
<dbReference type="CDD" id="cd14871">
    <property type="entry name" value="uS7_Chloroplast"/>
    <property type="match status" value="1"/>
</dbReference>
<dbReference type="FunFam" id="1.10.455.10:FF:000001">
    <property type="entry name" value="30S ribosomal protein S7"/>
    <property type="match status" value="1"/>
</dbReference>
<dbReference type="Gene3D" id="1.10.455.10">
    <property type="entry name" value="Ribosomal protein S7 domain"/>
    <property type="match status" value="1"/>
</dbReference>
<dbReference type="HAMAP" id="MF_00480_B">
    <property type="entry name" value="Ribosomal_uS7_B"/>
    <property type="match status" value="1"/>
</dbReference>
<dbReference type="InterPro" id="IPR000235">
    <property type="entry name" value="Ribosomal_uS7"/>
</dbReference>
<dbReference type="InterPro" id="IPR005717">
    <property type="entry name" value="Ribosomal_uS7_bac/org-type"/>
</dbReference>
<dbReference type="InterPro" id="IPR023798">
    <property type="entry name" value="Ribosomal_uS7_dom"/>
</dbReference>
<dbReference type="InterPro" id="IPR036823">
    <property type="entry name" value="Ribosomal_uS7_dom_sf"/>
</dbReference>
<dbReference type="NCBIfam" id="TIGR01029">
    <property type="entry name" value="rpsG_bact"/>
    <property type="match status" value="1"/>
</dbReference>
<dbReference type="PANTHER" id="PTHR11205">
    <property type="entry name" value="RIBOSOMAL PROTEIN S7"/>
    <property type="match status" value="1"/>
</dbReference>
<dbReference type="Pfam" id="PF00177">
    <property type="entry name" value="Ribosomal_S7"/>
    <property type="match status" value="1"/>
</dbReference>
<dbReference type="PIRSF" id="PIRSF002122">
    <property type="entry name" value="RPS7p_RPS7a_RPS5e_RPS7o"/>
    <property type="match status" value="1"/>
</dbReference>
<dbReference type="SUPFAM" id="SSF47973">
    <property type="entry name" value="Ribosomal protein S7"/>
    <property type="match status" value="1"/>
</dbReference>
<gene>
    <name type="primary">rps7-A</name>
</gene>
<gene>
    <name type="primary">rps7-B</name>
</gene>
<keyword id="KW-0150">Chloroplast</keyword>
<keyword id="KW-0934">Plastid</keyword>
<keyword id="KW-0687">Ribonucleoprotein</keyword>
<keyword id="KW-0689">Ribosomal protein</keyword>
<keyword id="KW-0694">RNA-binding</keyword>
<keyword id="KW-0699">rRNA-binding</keyword>
<evidence type="ECO:0000250" key="1"/>
<evidence type="ECO:0000255" key="2">
    <source>
        <dbReference type="HAMAP-Rule" id="MF_00480"/>
    </source>
</evidence>
<evidence type="ECO:0000305" key="3"/>
<reference key="1">
    <citation type="journal article" date="2004" name="Mol. Biol. Evol.">
        <title>Chloroplast phylogeny indicates that bryophytes are monophyletic.</title>
        <authorList>
            <person name="Nishiyama T."/>
            <person name="Wolf P.G."/>
            <person name="Kugita M."/>
            <person name="Sinclair R.B."/>
            <person name="Sugita M."/>
            <person name="Sugiura C."/>
            <person name="Wakasugi T."/>
            <person name="Yamada K."/>
            <person name="Yoshinaga K."/>
            <person name="Yamaguchi K."/>
            <person name="Ueda K."/>
            <person name="Hasebe M."/>
        </authorList>
    </citation>
    <scope>NUCLEOTIDE SEQUENCE [LARGE SCALE GENOMIC DNA]</scope>
    <source>
        <strain>Kingyoku</strain>
    </source>
</reference>
<sequence>MSRQSETKKRTAKSDPIYRNRSVSMFINHILKDGEKSLAHKILYRAMKQIKRKTKKNPLSVLRQAVYRVTPNVAVKSRRVGGSNYQVPVEVKPARGKALAIRWIVGASRNRSGRSMASKSSYELIDAARNTGSAIRKKEETHKMAEANKAFAHLR</sequence>
<protein>
    <recommendedName>
        <fullName evidence="2">Small ribosomal subunit protein uS7cz/uS7cy</fullName>
    </recommendedName>
    <alternativeName>
        <fullName>30S ribosomal protein S7, chloroplastic</fullName>
    </alternativeName>
</protein>
<accession>Q8W8V0</accession>
<proteinExistence type="inferred from homology"/>
<feature type="chain" id="PRO_0000124495" description="Small ribosomal subunit protein uS7cz/uS7cy">
    <location>
        <begin position="1"/>
        <end position="155"/>
    </location>
</feature>